<gene>
    <name evidence="1" type="primary">orn</name>
    <name type="synonym">ornA</name>
    <name type="ordered locus">SCO2793</name>
    <name type="ORF">2SCC13.01</name>
</gene>
<accession>P57666</accession>
<accession>Q9KWH7</accession>
<keyword id="KW-0963">Cytoplasm</keyword>
<keyword id="KW-0269">Exonuclease</keyword>
<keyword id="KW-0378">Hydrolase</keyword>
<keyword id="KW-0540">Nuclease</keyword>
<keyword id="KW-1185">Reference proteome</keyword>
<comment type="function">
    <text>3'-to-5' exoribonuclease specific for small oligoribonucleotides.</text>
</comment>
<comment type="subcellular location">
    <subcellularLocation>
        <location evidence="1">Cytoplasm</location>
    </subcellularLocation>
</comment>
<comment type="similarity">
    <text evidence="1">Belongs to the oligoribonuclease family.</text>
</comment>
<feature type="chain" id="PRO_0000111073" description="Oligoribonuclease">
    <location>
        <begin position="1"/>
        <end position="200"/>
    </location>
</feature>
<feature type="domain" description="Exonuclease" evidence="1">
    <location>
        <begin position="5"/>
        <end position="169"/>
    </location>
</feature>
<feature type="active site" evidence="1">
    <location>
        <position position="126"/>
    </location>
</feature>
<organism>
    <name type="scientific">Streptomyces coelicolor (strain ATCC BAA-471 / A3(2) / M145)</name>
    <dbReference type="NCBI Taxonomy" id="100226"/>
    <lineage>
        <taxon>Bacteria</taxon>
        <taxon>Bacillati</taxon>
        <taxon>Actinomycetota</taxon>
        <taxon>Actinomycetes</taxon>
        <taxon>Kitasatosporales</taxon>
        <taxon>Streptomycetaceae</taxon>
        <taxon>Streptomyces</taxon>
        <taxon>Streptomyces albidoflavus group</taxon>
    </lineage>
</organism>
<protein>
    <recommendedName>
        <fullName evidence="1">Oligoribonuclease</fullName>
        <ecNumber evidence="1">3.1.15.-</ecNumber>
    </recommendedName>
</protein>
<dbReference type="EC" id="3.1.15.-" evidence="1"/>
<dbReference type="EMBL" id="AB036424">
    <property type="protein sequence ID" value="BAB03461.1"/>
    <property type="molecule type" value="Genomic_DNA"/>
</dbReference>
<dbReference type="EMBL" id="AL939114">
    <property type="protein sequence ID" value="CAC10102.1"/>
    <property type="molecule type" value="Genomic_DNA"/>
</dbReference>
<dbReference type="RefSeq" id="NP_627023.1">
    <property type="nucleotide sequence ID" value="NC_003888.3"/>
</dbReference>
<dbReference type="RefSeq" id="WP_003976007.1">
    <property type="nucleotide sequence ID" value="NZ_VNID01000010.1"/>
</dbReference>
<dbReference type="SMR" id="P57666"/>
<dbReference type="FunCoup" id="P57666">
    <property type="interactions" value="331"/>
</dbReference>
<dbReference type="STRING" id="100226.gene:17760400"/>
<dbReference type="PaxDb" id="100226-SCO2793"/>
<dbReference type="GeneID" id="91386205"/>
<dbReference type="KEGG" id="sco:SCO2793"/>
<dbReference type="PATRIC" id="fig|100226.15.peg.2850"/>
<dbReference type="eggNOG" id="COG1949">
    <property type="taxonomic scope" value="Bacteria"/>
</dbReference>
<dbReference type="HOGENOM" id="CLU_064761_3_0_11"/>
<dbReference type="InParanoid" id="P57666"/>
<dbReference type="OrthoDB" id="9801329at2"/>
<dbReference type="PhylomeDB" id="P57666"/>
<dbReference type="Proteomes" id="UP000001973">
    <property type="component" value="Chromosome"/>
</dbReference>
<dbReference type="GO" id="GO:0005737">
    <property type="term" value="C:cytoplasm"/>
    <property type="evidence" value="ECO:0007669"/>
    <property type="project" value="UniProtKB-SubCell"/>
</dbReference>
<dbReference type="GO" id="GO:0000175">
    <property type="term" value="F:3'-5'-RNA exonuclease activity"/>
    <property type="evidence" value="ECO:0007669"/>
    <property type="project" value="InterPro"/>
</dbReference>
<dbReference type="GO" id="GO:0003676">
    <property type="term" value="F:nucleic acid binding"/>
    <property type="evidence" value="ECO:0007669"/>
    <property type="project" value="InterPro"/>
</dbReference>
<dbReference type="CDD" id="cd06135">
    <property type="entry name" value="Orn"/>
    <property type="match status" value="1"/>
</dbReference>
<dbReference type="FunFam" id="3.30.420.10:FF:000003">
    <property type="entry name" value="Oligoribonuclease"/>
    <property type="match status" value="1"/>
</dbReference>
<dbReference type="Gene3D" id="3.30.420.10">
    <property type="entry name" value="Ribonuclease H-like superfamily/Ribonuclease H"/>
    <property type="match status" value="1"/>
</dbReference>
<dbReference type="HAMAP" id="MF_00045">
    <property type="entry name" value="Oligoribonuclease"/>
    <property type="match status" value="1"/>
</dbReference>
<dbReference type="InterPro" id="IPR013520">
    <property type="entry name" value="Exonuclease_RNaseT/DNA_pol3"/>
</dbReference>
<dbReference type="InterPro" id="IPR022894">
    <property type="entry name" value="Oligoribonuclease"/>
</dbReference>
<dbReference type="InterPro" id="IPR012337">
    <property type="entry name" value="RNaseH-like_sf"/>
</dbReference>
<dbReference type="InterPro" id="IPR036397">
    <property type="entry name" value="RNaseH_sf"/>
</dbReference>
<dbReference type="NCBIfam" id="NF003765">
    <property type="entry name" value="PRK05359.1"/>
    <property type="match status" value="1"/>
</dbReference>
<dbReference type="PANTHER" id="PTHR11046">
    <property type="entry name" value="OLIGORIBONUCLEASE, MITOCHONDRIAL"/>
    <property type="match status" value="1"/>
</dbReference>
<dbReference type="PANTHER" id="PTHR11046:SF0">
    <property type="entry name" value="OLIGORIBONUCLEASE, MITOCHONDRIAL"/>
    <property type="match status" value="1"/>
</dbReference>
<dbReference type="Pfam" id="PF00929">
    <property type="entry name" value="RNase_T"/>
    <property type="match status" value="1"/>
</dbReference>
<dbReference type="SMART" id="SM00479">
    <property type="entry name" value="EXOIII"/>
    <property type="match status" value="1"/>
</dbReference>
<dbReference type="SUPFAM" id="SSF53098">
    <property type="entry name" value="Ribonuclease H-like"/>
    <property type="match status" value="1"/>
</dbReference>
<reference key="1">
    <citation type="journal article" date="2000" name="J. Bacteriol.">
        <title>An oligoribonuclease gene in Streptomyces griseus.</title>
        <authorList>
            <person name="Ohnishi Y."/>
            <person name="Nishiyama Y."/>
            <person name="Sato R."/>
            <person name="Kameyama S."/>
            <person name="Horinouchi S."/>
        </authorList>
    </citation>
    <scope>NUCLEOTIDE SEQUENCE [GENOMIC DNA]</scope>
    <scope>CHARACTERIZATION</scope>
    <source>
        <strain>A3(2) / M130</strain>
    </source>
</reference>
<reference key="2">
    <citation type="journal article" date="2002" name="Nature">
        <title>Complete genome sequence of the model actinomycete Streptomyces coelicolor A3(2).</title>
        <authorList>
            <person name="Bentley S.D."/>
            <person name="Chater K.F."/>
            <person name="Cerdeno-Tarraga A.-M."/>
            <person name="Challis G.L."/>
            <person name="Thomson N.R."/>
            <person name="James K.D."/>
            <person name="Harris D.E."/>
            <person name="Quail M.A."/>
            <person name="Kieser H."/>
            <person name="Harper D."/>
            <person name="Bateman A."/>
            <person name="Brown S."/>
            <person name="Chandra G."/>
            <person name="Chen C.W."/>
            <person name="Collins M."/>
            <person name="Cronin A."/>
            <person name="Fraser A."/>
            <person name="Goble A."/>
            <person name="Hidalgo J."/>
            <person name="Hornsby T."/>
            <person name="Howarth S."/>
            <person name="Huang C.-H."/>
            <person name="Kieser T."/>
            <person name="Larke L."/>
            <person name="Murphy L.D."/>
            <person name="Oliver K."/>
            <person name="O'Neil S."/>
            <person name="Rabbinowitsch E."/>
            <person name="Rajandream M.A."/>
            <person name="Rutherford K.M."/>
            <person name="Rutter S."/>
            <person name="Seeger K."/>
            <person name="Saunders D."/>
            <person name="Sharp S."/>
            <person name="Squares R."/>
            <person name="Squares S."/>
            <person name="Taylor K."/>
            <person name="Warren T."/>
            <person name="Wietzorrek A."/>
            <person name="Woodward J.R."/>
            <person name="Barrell B.G."/>
            <person name="Parkhill J."/>
            <person name="Hopwood D.A."/>
        </authorList>
    </citation>
    <scope>NUCLEOTIDE SEQUENCE [LARGE SCALE GENOMIC DNA]</scope>
    <source>
        <strain>ATCC BAA-471 / A3(2) / M145</strain>
    </source>
</reference>
<sequence>MNDRMVWIDCEMTGLSLSDDALIEVAALVTDSELNILGEGVDIVIRPPERALETMPEVVREMHTASGLLAELDGGTTLADAEAQVLAYVREHVKEPGKAPLCGNSVGTDRGFLLRDMATLEGYLHYRIVDVSSIKELARRWYPRAYFNSPEKNGNHRALADIRESIAELRYYREAVFVPQPGPDSDTARAIAAKHVVSAG</sequence>
<proteinExistence type="evidence at protein level"/>
<name>ORN_STRCO</name>
<evidence type="ECO:0000255" key="1">
    <source>
        <dbReference type="HAMAP-Rule" id="MF_00045"/>
    </source>
</evidence>